<accession>A9A078</accession>
<organism>
    <name type="scientific">Desulfosudis oleivorans (strain DSM 6200 / JCM 39069 / Hxd3)</name>
    <name type="common">Desulfococcus oleovorans</name>
    <dbReference type="NCBI Taxonomy" id="96561"/>
    <lineage>
        <taxon>Bacteria</taxon>
        <taxon>Pseudomonadati</taxon>
        <taxon>Thermodesulfobacteriota</taxon>
        <taxon>Desulfobacteria</taxon>
        <taxon>Desulfobacterales</taxon>
        <taxon>Desulfosudaceae</taxon>
        <taxon>Desulfosudis</taxon>
    </lineage>
</organism>
<proteinExistence type="inferred from homology"/>
<name>SYT_DESOH</name>
<keyword id="KW-0030">Aminoacyl-tRNA synthetase</keyword>
<keyword id="KW-0067">ATP-binding</keyword>
<keyword id="KW-0963">Cytoplasm</keyword>
<keyword id="KW-0436">Ligase</keyword>
<keyword id="KW-0479">Metal-binding</keyword>
<keyword id="KW-0547">Nucleotide-binding</keyword>
<keyword id="KW-0648">Protein biosynthesis</keyword>
<keyword id="KW-1185">Reference proteome</keyword>
<keyword id="KW-0694">RNA-binding</keyword>
<keyword id="KW-0820">tRNA-binding</keyword>
<keyword id="KW-0862">Zinc</keyword>
<protein>
    <recommendedName>
        <fullName evidence="1">Threonine--tRNA ligase</fullName>
        <ecNumber evidence="1">6.1.1.3</ecNumber>
    </recommendedName>
    <alternativeName>
        <fullName evidence="1">Threonyl-tRNA synthetase</fullName>
        <shortName evidence="1">ThrRS</shortName>
    </alternativeName>
</protein>
<feature type="chain" id="PRO_1000098567" description="Threonine--tRNA ligase">
    <location>
        <begin position="1"/>
        <end position="637"/>
    </location>
</feature>
<feature type="domain" description="TGS" evidence="2">
    <location>
        <begin position="1"/>
        <end position="61"/>
    </location>
</feature>
<feature type="region of interest" description="Catalytic" evidence="1">
    <location>
        <begin position="238"/>
        <end position="528"/>
    </location>
</feature>
<feature type="binding site" evidence="1">
    <location>
        <position position="329"/>
    </location>
    <ligand>
        <name>Zn(2+)</name>
        <dbReference type="ChEBI" id="CHEBI:29105"/>
    </ligand>
</feature>
<feature type="binding site" evidence="1">
    <location>
        <position position="380"/>
    </location>
    <ligand>
        <name>Zn(2+)</name>
        <dbReference type="ChEBI" id="CHEBI:29105"/>
    </ligand>
</feature>
<feature type="binding site" evidence="1">
    <location>
        <position position="505"/>
    </location>
    <ligand>
        <name>Zn(2+)</name>
        <dbReference type="ChEBI" id="CHEBI:29105"/>
    </ligand>
</feature>
<evidence type="ECO:0000255" key="1">
    <source>
        <dbReference type="HAMAP-Rule" id="MF_00184"/>
    </source>
</evidence>
<evidence type="ECO:0000255" key="2">
    <source>
        <dbReference type="PROSITE-ProRule" id="PRU01228"/>
    </source>
</evidence>
<reference key="1">
    <citation type="submission" date="2007-10" db="EMBL/GenBank/DDBJ databases">
        <title>Complete sequence of Desulfococcus oleovorans Hxd3.</title>
        <authorList>
            <consortium name="US DOE Joint Genome Institute"/>
            <person name="Copeland A."/>
            <person name="Lucas S."/>
            <person name="Lapidus A."/>
            <person name="Barry K."/>
            <person name="Glavina del Rio T."/>
            <person name="Dalin E."/>
            <person name="Tice H."/>
            <person name="Pitluck S."/>
            <person name="Kiss H."/>
            <person name="Brettin T."/>
            <person name="Bruce D."/>
            <person name="Detter J.C."/>
            <person name="Han C."/>
            <person name="Schmutz J."/>
            <person name="Larimer F."/>
            <person name="Land M."/>
            <person name="Hauser L."/>
            <person name="Kyrpides N."/>
            <person name="Kim E."/>
            <person name="Wawrik B."/>
            <person name="Richardson P."/>
        </authorList>
    </citation>
    <scope>NUCLEOTIDE SEQUENCE [LARGE SCALE GENOMIC DNA]</scope>
    <source>
        <strain>DSM 6200 / JCM 39069 / Hxd3</strain>
    </source>
</reference>
<sequence>MITITLPDSSTKTFDGPVTGEQIAKSISEGLWRECVAVEVDGAAMDLSEPIATDAAVRLITTRDPEGLHIMRHSAAHVMAEAVQRVFPDAELTIGPVVEDGFYYDIDMEPVSEEIFSRVEAEIKKIVSAKIPFVRKEVDKAEALDRYRDQPYKTEILNEIEDDTVSLYTNGDFTDLCRGPHVPHTGFVRAVKLTKISGAYWRGDQNREQLQRLYGTAFFSKKELDAYLTLIEEAKKRDHRKLGAELDLFSFHEEAAGMPFFHPNGMKLWNALLDYWRLEHRAAGYVEVKTPVMLDRALWEKSGHWENYRENMYVSVIDDNQYAIKPMNCPGGMLLYKEKRYSYRDLPLRVAEIGLVHRHELSGVLSGLFRVRAFHQDDAHIFMTPDQIEQEIFGVLKLVETIYSTFGLGFHLELSTRPAKSIGTDEQWVKATAGLRAALDAYGKGYAVNEGDGAFYGPKIDVHIKDALGRTWQCGTIQLDMSLPERFDLSYIDAGSEKQRPVMIHRVIYGSIERFLGILIEHFAGKFPLWLAPTQAVLLPLNDDMIPYAREVRQEFEQAGIRTEIDDRSESLNKKVRQAQIDKIPLIITLGGKEKEARTLSVRTLDGQVRHGVSHEAFFAVAKEHIAKRLQTPVVFA</sequence>
<gene>
    <name evidence="1" type="primary">thrS</name>
    <name type="ordered locus">Dole_3194</name>
</gene>
<comment type="function">
    <text evidence="1">Catalyzes the attachment of threonine to tRNA(Thr) in a two-step reaction: L-threonine is first activated by ATP to form Thr-AMP and then transferred to the acceptor end of tRNA(Thr). Also edits incorrectly charged L-seryl-tRNA(Thr).</text>
</comment>
<comment type="catalytic activity">
    <reaction evidence="1">
        <text>tRNA(Thr) + L-threonine + ATP = L-threonyl-tRNA(Thr) + AMP + diphosphate + H(+)</text>
        <dbReference type="Rhea" id="RHEA:24624"/>
        <dbReference type="Rhea" id="RHEA-COMP:9670"/>
        <dbReference type="Rhea" id="RHEA-COMP:9704"/>
        <dbReference type="ChEBI" id="CHEBI:15378"/>
        <dbReference type="ChEBI" id="CHEBI:30616"/>
        <dbReference type="ChEBI" id="CHEBI:33019"/>
        <dbReference type="ChEBI" id="CHEBI:57926"/>
        <dbReference type="ChEBI" id="CHEBI:78442"/>
        <dbReference type="ChEBI" id="CHEBI:78534"/>
        <dbReference type="ChEBI" id="CHEBI:456215"/>
        <dbReference type="EC" id="6.1.1.3"/>
    </reaction>
</comment>
<comment type="cofactor">
    <cofactor evidence="1">
        <name>Zn(2+)</name>
        <dbReference type="ChEBI" id="CHEBI:29105"/>
    </cofactor>
    <text evidence="1">Binds 1 zinc ion per subunit.</text>
</comment>
<comment type="subunit">
    <text evidence="1">Homodimer.</text>
</comment>
<comment type="subcellular location">
    <subcellularLocation>
        <location evidence="1">Cytoplasm</location>
    </subcellularLocation>
</comment>
<comment type="similarity">
    <text evidence="1">Belongs to the class-II aminoacyl-tRNA synthetase family.</text>
</comment>
<dbReference type="EC" id="6.1.1.3" evidence="1"/>
<dbReference type="EMBL" id="CP000859">
    <property type="protein sequence ID" value="ABW68997.1"/>
    <property type="molecule type" value="Genomic_DNA"/>
</dbReference>
<dbReference type="RefSeq" id="WP_012176607.1">
    <property type="nucleotide sequence ID" value="NC_009943.1"/>
</dbReference>
<dbReference type="SMR" id="A9A078"/>
<dbReference type="STRING" id="96561.Dole_3194"/>
<dbReference type="KEGG" id="dol:Dole_3194"/>
<dbReference type="eggNOG" id="COG0441">
    <property type="taxonomic scope" value="Bacteria"/>
</dbReference>
<dbReference type="HOGENOM" id="CLU_008554_0_1_7"/>
<dbReference type="OrthoDB" id="9802304at2"/>
<dbReference type="Proteomes" id="UP000008561">
    <property type="component" value="Chromosome"/>
</dbReference>
<dbReference type="GO" id="GO:0005737">
    <property type="term" value="C:cytoplasm"/>
    <property type="evidence" value="ECO:0007669"/>
    <property type="project" value="UniProtKB-SubCell"/>
</dbReference>
<dbReference type="GO" id="GO:0005524">
    <property type="term" value="F:ATP binding"/>
    <property type="evidence" value="ECO:0007669"/>
    <property type="project" value="UniProtKB-UniRule"/>
</dbReference>
<dbReference type="GO" id="GO:0046872">
    <property type="term" value="F:metal ion binding"/>
    <property type="evidence" value="ECO:0007669"/>
    <property type="project" value="UniProtKB-KW"/>
</dbReference>
<dbReference type="GO" id="GO:0004829">
    <property type="term" value="F:threonine-tRNA ligase activity"/>
    <property type="evidence" value="ECO:0007669"/>
    <property type="project" value="UniProtKB-UniRule"/>
</dbReference>
<dbReference type="GO" id="GO:0000049">
    <property type="term" value="F:tRNA binding"/>
    <property type="evidence" value="ECO:0007669"/>
    <property type="project" value="UniProtKB-KW"/>
</dbReference>
<dbReference type="GO" id="GO:0006435">
    <property type="term" value="P:threonyl-tRNA aminoacylation"/>
    <property type="evidence" value="ECO:0007669"/>
    <property type="project" value="UniProtKB-UniRule"/>
</dbReference>
<dbReference type="CDD" id="cd01667">
    <property type="entry name" value="TGS_ThrRS"/>
    <property type="match status" value="1"/>
</dbReference>
<dbReference type="CDD" id="cd00860">
    <property type="entry name" value="ThrRS_anticodon"/>
    <property type="match status" value="1"/>
</dbReference>
<dbReference type="CDD" id="cd00771">
    <property type="entry name" value="ThrRS_core"/>
    <property type="match status" value="1"/>
</dbReference>
<dbReference type="FunFam" id="3.10.20.30:FF:000005">
    <property type="entry name" value="Threonine--tRNA ligase"/>
    <property type="match status" value="1"/>
</dbReference>
<dbReference type="FunFam" id="3.30.930.10:FF:000019">
    <property type="entry name" value="Threonine--tRNA ligase"/>
    <property type="match status" value="1"/>
</dbReference>
<dbReference type="FunFam" id="3.40.50.800:FF:000001">
    <property type="entry name" value="Threonine--tRNA ligase"/>
    <property type="match status" value="1"/>
</dbReference>
<dbReference type="FunFam" id="3.30.980.10:FF:000005">
    <property type="entry name" value="Threonyl-tRNA synthetase, mitochondrial"/>
    <property type="match status" value="1"/>
</dbReference>
<dbReference type="Gene3D" id="3.10.20.30">
    <property type="match status" value="1"/>
</dbReference>
<dbReference type="Gene3D" id="3.40.50.800">
    <property type="entry name" value="Anticodon-binding domain"/>
    <property type="match status" value="1"/>
</dbReference>
<dbReference type="Gene3D" id="3.30.930.10">
    <property type="entry name" value="Bira Bifunctional Protein, Domain 2"/>
    <property type="match status" value="1"/>
</dbReference>
<dbReference type="Gene3D" id="3.30.980.10">
    <property type="entry name" value="Threonyl-trna Synthetase, Chain A, domain 2"/>
    <property type="match status" value="1"/>
</dbReference>
<dbReference type="HAMAP" id="MF_00184">
    <property type="entry name" value="Thr_tRNA_synth"/>
    <property type="match status" value="1"/>
</dbReference>
<dbReference type="InterPro" id="IPR002314">
    <property type="entry name" value="aa-tRNA-synt_IIb"/>
</dbReference>
<dbReference type="InterPro" id="IPR006195">
    <property type="entry name" value="aa-tRNA-synth_II"/>
</dbReference>
<dbReference type="InterPro" id="IPR045864">
    <property type="entry name" value="aa-tRNA-synth_II/BPL/LPL"/>
</dbReference>
<dbReference type="InterPro" id="IPR004154">
    <property type="entry name" value="Anticodon-bd"/>
</dbReference>
<dbReference type="InterPro" id="IPR036621">
    <property type="entry name" value="Anticodon-bd_dom_sf"/>
</dbReference>
<dbReference type="InterPro" id="IPR012675">
    <property type="entry name" value="Beta-grasp_dom_sf"/>
</dbReference>
<dbReference type="InterPro" id="IPR004095">
    <property type="entry name" value="TGS"/>
</dbReference>
<dbReference type="InterPro" id="IPR012676">
    <property type="entry name" value="TGS-like"/>
</dbReference>
<dbReference type="InterPro" id="IPR002320">
    <property type="entry name" value="Thr-tRNA-ligase_IIa"/>
</dbReference>
<dbReference type="InterPro" id="IPR018163">
    <property type="entry name" value="Thr/Ala-tRNA-synth_IIc_edit"/>
</dbReference>
<dbReference type="InterPro" id="IPR047246">
    <property type="entry name" value="ThrRS_anticodon"/>
</dbReference>
<dbReference type="InterPro" id="IPR033728">
    <property type="entry name" value="ThrRS_core"/>
</dbReference>
<dbReference type="InterPro" id="IPR012947">
    <property type="entry name" value="tRNA_SAD"/>
</dbReference>
<dbReference type="NCBIfam" id="TIGR00418">
    <property type="entry name" value="thrS"/>
    <property type="match status" value="1"/>
</dbReference>
<dbReference type="PANTHER" id="PTHR11451:SF44">
    <property type="entry name" value="THREONINE--TRNA LIGASE, CHLOROPLASTIC_MITOCHONDRIAL 2"/>
    <property type="match status" value="1"/>
</dbReference>
<dbReference type="PANTHER" id="PTHR11451">
    <property type="entry name" value="THREONINE-TRNA LIGASE"/>
    <property type="match status" value="1"/>
</dbReference>
<dbReference type="Pfam" id="PF03129">
    <property type="entry name" value="HGTP_anticodon"/>
    <property type="match status" value="1"/>
</dbReference>
<dbReference type="Pfam" id="PF02824">
    <property type="entry name" value="TGS"/>
    <property type="match status" value="1"/>
</dbReference>
<dbReference type="Pfam" id="PF00587">
    <property type="entry name" value="tRNA-synt_2b"/>
    <property type="match status" value="1"/>
</dbReference>
<dbReference type="Pfam" id="PF07973">
    <property type="entry name" value="tRNA_SAD"/>
    <property type="match status" value="1"/>
</dbReference>
<dbReference type="PRINTS" id="PR01047">
    <property type="entry name" value="TRNASYNTHTHR"/>
</dbReference>
<dbReference type="SMART" id="SM00863">
    <property type="entry name" value="tRNA_SAD"/>
    <property type="match status" value="1"/>
</dbReference>
<dbReference type="SUPFAM" id="SSF52954">
    <property type="entry name" value="Class II aaRS ABD-related"/>
    <property type="match status" value="1"/>
</dbReference>
<dbReference type="SUPFAM" id="SSF55681">
    <property type="entry name" value="Class II aaRS and biotin synthetases"/>
    <property type="match status" value="1"/>
</dbReference>
<dbReference type="SUPFAM" id="SSF81271">
    <property type="entry name" value="TGS-like"/>
    <property type="match status" value="1"/>
</dbReference>
<dbReference type="SUPFAM" id="SSF55186">
    <property type="entry name" value="ThrRS/AlaRS common domain"/>
    <property type="match status" value="1"/>
</dbReference>
<dbReference type="PROSITE" id="PS50862">
    <property type="entry name" value="AA_TRNA_LIGASE_II"/>
    <property type="match status" value="1"/>
</dbReference>
<dbReference type="PROSITE" id="PS51880">
    <property type="entry name" value="TGS"/>
    <property type="match status" value="1"/>
</dbReference>